<reference key="1">
    <citation type="submission" date="2007-02" db="EMBL/GenBank/DDBJ databases">
        <title>Complete sequence of Mycobacterium sp. JLS.</title>
        <authorList>
            <consortium name="US DOE Joint Genome Institute"/>
            <person name="Copeland A."/>
            <person name="Lucas S."/>
            <person name="Lapidus A."/>
            <person name="Barry K."/>
            <person name="Detter J.C."/>
            <person name="Glavina del Rio T."/>
            <person name="Hammon N."/>
            <person name="Israni S."/>
            <person name="Dalin E."/>
            <person name="Tice H."/>
            <person name="Pitluck S."/>
            <person name="Chain P."/>
            <person name="Malfatti S."/>
            <person name="Shin M."/>
            <person name="Vergez L."/>
            <person name="Schmutz J."/>
            <person name="Larimer F."/>
            <person name="Land M."/>
            <person name="Hauser L."/>
            <person name="Kyrpides N."/>
            <person name="Mikhailova N."/>
            <person name="Miller C.D."/>
            <person name="Anderson A.J."/>
            <person name="Sims R.C."/>
            <person name="Richardson P."/>
        </authorList>
    </citation>
    <scope>NUCLEOTIDE SEQUENCE [LARGE SCALE GENOMIC DNA]</scope>
    <source>
        <strain>JLS</strain>
    </source>
</reference>
<protein>
    <recommendedName>
        <fullName evidence="1">Glutamate--tRNA ligase</fullName>
        <ecNumber evidence="1">6.1.1.17</ecNumber>
    </recommendedName>
    <alternativeName>
        <fullName evidence="1">Glutamyl-tRNA synthetase</fullName>
        <shortName evidence="1">GluRS</shortName>
    </alternativeName>
</protein>
<evidence type="ECO:0000255" key="1">
    <source>
        <dbReference type="HAMAP-Rule" id="MF_00022"/>
    </source>
</evidence>
<proteinExistence type="inferred from homology"/>
<organism>
    <name type="scientific">Mycobacterium sp. (strain JLS)</name>
    <dbReference type="NCBI Taxonomy" id="164757"/>
    <lineage>
        <taxon>Bacteria</taxon>
        <taxon>Bacillati</taxon>
        <taxon>Actinomycetota</taxon>
        <taxon>Actinomycetes</taxon>
        <taxon>Mycobacteriales</taxon>
        <taxon>Mycobacteriaceae</taxon>
        <taxon>Mycobacterium</taxon>
    </lineage>
</organism>
<comment type="function">
    <text evidence="1">Catalyzes the attachment of glutamate to tRNA(Glu) in a two-step reaction: glutamate is first activated by ATP to form Glu-AMP and then transferred to the acceptor end of tRNA(Glu).</text>
</comment>
<comment type="catalytic activity">
    <reaction evidence="1">
        <text>tRNA(Glu) + L-glutamate + ATP = L-glutamyl-tRNA(Glu) + AMP + diphosphate</text>
        <dbReference type="Rhea" id="RHEA:23540"/>
        <dbReference type="Rhea" id="RHEA-COMP:9663"/>
        <dbReference type="Rhea" id="RHEA-COMP:9680"/>
        <dbReference type="ChEBI" id="CHEBI:29985"/>
        <dbReference type="ChEBI" id="CHEBI:30616"/>
        <dbReference type="ChEBI" id="CHEBI:33019"/>
        <dbReference type="ChEBI" id="CHEBI:78442"/>
        <dbReference type="ChEBI" id="CHEBI:78520"/>
        <dbReference type="ChEBI" id="CHEBI:456215"/>
        <dbReference type="EC" id="6.1.1.17"/>
    </reaction>
</comment>
<comment type="subunit">
    <text evidence="1">Monomer.</text>
</comment>
<comment type="subcellular location">
    <subcellularLocation>
        <location evidence="1">Cytoplasm</location>
    </subcellularLocation>
</comment>
<comment type="similarity">
    <text evidence="1">Belongs to the class-I aminoacyl-tRNA synthetase family. Glutamate--tRNA ligase type 1 subfamily.</text>
</comment>
<gene>
    <name evidence="1" type="primary">gltX</name>
    <name type="ordered locus">Mjls_1899</name>
</gene>
<accession>A3PXR0</accession>
<name>SYE_MYCSJ</name>
<feature type="chain" id="PRO_0000330981" description="Glutamate--tRNA ligase">
    <location>
        <begin position="1"/>
        <end position="490"/>
    </location>
</feature>
<feature type="short sequence motif" description="'HIGH' region" evidence="1">
    <location>
        <begin position="12"/>
        <end position="22"/>
    </location>
</feature>
<feature type="short sequence motif" description="'KMSKS' region" evidence="1">
    <location>
        <begin position="256"/>
        <end position="260"/>
    </location>
</feature>
<feature type="binding site" evidence="1">
    <location>
        <position position="259"/>
    </location>
    <ligand>
        <name>ATP</name>
        <dbReference type="ChEBI" id="CHEBI:30616"/>
    </ligand>
</feature>
<dbReference type="EC" id="6.1.1.17" evidence="1"/>
<dbReference type="EMBL" id="CP000580">
    <property type="protein sequence ID" value="ABN97687.1"/>
    <property type="molecule type" value="Genomic_DNA"/>
</dbReference>
<dbReference type="SMR" id="A3PXR0"/>
<dbReference type="KEGG" id="mjl:Mjls_1899"/>
<dbReference type="HOGENOM" id="CLU_015768_6_1_11"/>
<dbReference type="BioCyc" id="MSP164757:G1G8C-1916-MONOMER"/>
<dbReference type="GO" id="GO:0005829">
    <property type="term" value="C:cytosol"/>
    <property type="evidence" value="ECO:0007669"/>
    <property type="project" value="TreeGrafter"/>
</dbReference>
<dbReference type="GO" id="GO:0005524">
    <property type="term" value="F:ATP binding"/>
    <property type="evidence" value="ECO:0007669"/>
    <property type="project" value="UniProtKB-UniRule"/>
</dbReference>
<dbReference type="GO" id="GO:0004818">
    <property type="term" value="F:glutamate-tRNA ligase activity"/>
    <property type="evidence" value="ECO:0007669"/>
    <property type="project" value="UniProtKB-UniRule"/>
</dbReference>
<dbReference type="GO" id="GO:0000049">
    <property type="term" value="F:tRNA binding"/>
    <property type="evidence" value="ECO:0007669"/>
    <property type="project" value="InterPro"/>
</dbReference>
<dbReference type="GO" id="GO:0008270">
    <property type="term" value="F:zinc ion binding"/>
    <property type="evidence" value="ECO:0007669"/>
    <property type="project" value="InterPro"/>
</dbReference>
<dbReference type="GO" id="GO:0006424">
    <property type="term" value="P:glutamyl-tRNA aminoacylation"/>
    <property type="evidence" value="ECO:0007669"/>
    <property type="project" value="UniProtKB-UniRule"/>
</dbReference>
<dbReference type="CDD" id="cd00808">
    <property type="entry name" value="GluRS_core"/>
    <property type="match status" value="1"/>
</dbReference>
<dbReference type="FunFam" id="3.40.50.620:FF:000149">
    <property type="entry name" value="Glutamate--tRNA ligase"/>
    <property type="match status" value="1"/>
</dbReference>
<dbReference type="Gene3D" id="1.10.10.350">
    <property type="match status" value="1"/>
</dbReference>
<dbReference type="Gene3D" id="1.10.8.70">
    <property type="entry name" value="Glutamate-tRNA synthetase, class I, anticodon-binding domain 1"/>
    <property type="match status" value="1"/>
</dbReference>
<dbReference type="Gene3D" id="1.10.1160.10">
    <property type="entry name" value="Glutamyl-trna Synthetase, Domain 2"/>
    <property type="match status" value="1"/>
</dbReference>
<dbReference type="Gene3D" id="3.90.800.10">
    <property type="entry name" value="Glutamyl-tRNA Synthetase, Domain 3"/>
    <property type="match status" value="1"/>
</dbReference>
<dbReference type="Gene3D" id="3.40.50.620">
    <property type="entry name" value="HUPs"/>
    <property type="match status" value="1"/>
</dbReference>
<dbReference type="HAMAP" id="MF_00022">
    <property type="entry name" value="Glu_tRNA_synth_type1"/>
    <property type="match status" value="1"/>
</dbReference>
<dbReference type="InterPro" id="IPR045462">
    <property type="entry name" value="aa-tRNA-synth_I_cd-bd"/>
</dbReference>
<dbReference type="InterPro" id="IPR020751">
    <property type="entry name" value="aa-tRNA-synth_I_codon-bd_sub2"/>
</dbReference>
<dbReference type="InterPro" id="IPR008925">
    <property type="entry name" value="aa_tRNA-synth_I_cd-bd_sf"/>
</dbReference>
<dbReference type="InterPro" id="IPR004527">
    <property type="entry name" value="Glu-tRNA-ligase_bac/mito"/>
</dbReference>
<dbReference type="InterPro" id="IPR020752">
    <property type="entry name" value="Glu-tRNA-synth_I_codon-bd_sub1"/>
</dbReference>
<dbReference type="InterPro" id="IPR000924">
    <property type="entry name" value="Glu/Gln-tRNA-synth"/>
</dbReference>
<dbReference type="InterPro" id="IPR020058">
    <property type="entry name" value="Glu/Gln-tRNA-synth_Ib_cat-dom"/>
</dbReference>
<dbReference type="InterPro" id="IPR020061">
    <property type="entry name" value="Glu_tRNA_lig_a-bdl"/>
</dbReference>
<dbReference type="InterPro" id="IPR049940">
    <property type="entry name" value="GluQ/Sye"/>
</dbReference>
<dbReference type="InterPro" id="IPR033910">
    <property type="entry name" value="GluRS_core"/>
</dbReference>
<dbReference type="InterPro" id="IPR014729">
    <property type="entry name" value="Rossmann-like_a/b/a_fold"/>
</dbReference>
<dbReference type="NCBIfam" id="TIGR00464">
    <property type="entry name" value="gltX_bact"/>
    <property type="match status" value="1"/>
</dbReference>
<dbReference type="PANTHER" id="PTHR43311">
    <property type="entry name" value="GLUTAMATE--TRNA LIGASE"/>
    <property type="match status" value="1"/>
</dbReference>
<dbReference type="PANTHER" id="PTHR43311:SF2">
    <property type="entry name" value="GLUTAMATE--TRNA LIGASE, MITOCHONDRIAL-RELATED"/>
    <property type="match status" value="1"/>
</dbReference>
<dbReference type="Pfam" id="PF19269">
    <property type="entry name" value="Anticodon_2"/>
    <property type="match status" value="1"/>
</dbReference>
<dbReference type="Pfam" id="PF00749">
    <property type="entry name" value="tRNA-synt_1c"/>
    <property type="match status" value="1"/>
</dbReference>
<dbReference type="PRINTS" id="PR00987">
    <property type="entry name" value="TRNASYNTHGLU"/>
</dbReference>
<dbReference type="SUPFAM" id="SSF48163">
    <property type="entry name" value="An anticodon-binding domain of class I aminoacyl-tRNA synthetases"/>
    <property type="match status" value="1"/>
</dbReference>
<dbReference type="SUPFAM" id="SSF52374">
    <property type="entry name" value="Nucleotidylyl transferase"/>
    <property type="match status" value="1"/>
</dbReference>
<keyword id="KW-0030">Aminoacyl-tRNA synthetase</keyword>
<keyword id="KW-0067">ATP-binding</keyword>
<keyword id="KW-0963">Cytoplasm</keyword>
<keyword id="KW-0436">Ligase</keyword>
<keyword id="KW-0547">Nucleotide-binding</keyword>
<keyword id="KW-0648">Protein biosynthesis</keyword>
<sequence>MNNMAVRVRFCPSPTGTPHVGLIRTALFNWAYARHTGGTFVFRIEDTDSARDSEESYQAILDALNWLGLDYDEGPEIGGPYAPYRQSQRRDLYRDVIDRLIAAGEAYEAYSTAEEVEARHLAAGRNPKLGYDNFDRDLTDEQRAAHRAEGRNPVIRLRMPERDITWRDLVRGETTFGAGTMPDFALTRGNGEPLYTLVNPVDDALMKITHVLRGEDLLPSTPRQIALYEALIRIGVADGVPEFAHLPSVLGDGNKKLSKRDPQSNLFLHRDRGFIPEGLLNYLALLGWGIADDRDVFGLDEMVAAFDVVDVNSNPARFDQKKADALNAEHIRLLSEDEFTARLKAYFAAHGHDTGLDDAQFAEAARLVQTRIVVLGDAWGLLKFLDEGAFVLDERAAAKELKADAVPVLDAALAGLEGVGQWTTGAIEEALKKALLEDLELKPRKAFGPIRVAATGASVSPPLFESLELLGRDRSLARLRAGRDHAAAAA</sequence>